<reference key="1">
    <citation type="journal article" date="2010" name="Genome Biol. Evol.">
        <title>Continuing evolution of Burkholderia mallei through genome reduction and large-scale rearrangements.</title>
        <authorList>
            <person name="Losada L."/>
            <person name="Ronning C.M."/>
            <person name="DeShazer D."/>
            <person name="Woods D."/>
            <person name="Fedorova N."/>
            <person name="Kim H.S."/>
            <person name="Shabalina S.A."/>
            <person name="Pearson T.R."/>
            <person name="Brinkac L."/>
            <person name="Tan P."/>
            <person name="Nandi T."/>
            <person name="Crabtree J."/>
            <person name="Badger J."/>
            <person name="Beckstrom-Sternberg S."/>
            <person name="Saqib M."/>
            <person name="Schutzer S.E."/>
            <person name="Keim P."/>
            <person name="Nierman W.C."/>
        </authorList>
    </citation>
    <scope>NUCLEOTIDE SEQUENCE [LARGE SCALE GENOMIC DNA]</scope>
    <source>
        <strain>1710b</strain>
    </source>
</reference>
<evidence type="ECO:0000255" key="1">
    <source>
        <dbReference type="HAMAP-Rule" id="MF_01031"/>
    </source>
</evidence>
<dbReference type="EC" id="4.2.1.33" evidence="1"/>
<dbReference type="EMBL" id="CP000125">
    <property type="protein sequence ID" value="ABA51486.1"/>
    <property type="molecule type" value="Genomic_DNA"/>
</dbReference>
<dbReference type="RefSeq" id="WP_004187882.1">
    <property type="nucleotide sequence ID" value="NC_007435.1"/>
</dbReference>
<dbReference type="SMR" id="Q3JKG8"/>
<dbReference type="EnsemblBacteria" id="ABA51486">
    <property type="protein sequence ID" value="ABA51486"/>
    <property type="gene ID" value="BURPS1710b_A0776"/>
</dbReference>
<dbReference type="GeneID" id="93063904"/>
<dbReference type="KEGG" id="bpm:BURPS1710b_A0776"/>
<dbReference type="HOGENOM" id="CLU_081378_0_3_4"/>
<dbReference type="UniPathway" id="UPA00048">
    <property type="reaction ID" value="UER00071"/>
</dbReference>
<dbReference type="Proteomes" id="UP000002700">
    <property type="component" value="Chromosome II"/>
</dbReference>
<dbReference type="GO" id="GO:0009316">
    <property type="term" value="C:3-isopropylmalate dehydratase complex"/>
    <property type="evidence" value="ECO:0007669"/>
    <property type="project" value="InterPro"/>
</dbReference>
<dbReference type="GO" id="GO:0003861">
    <property type="term" value="F:3-isopropylmalate dehydratase activity"/>
    <property type="evidence" value="ECO:0007669"/>
    <property type="project" value="UniProtKB-UniRule"/>
</dbReference>
<dbReference type="GO" id="GO:0009098">
    <property type="term" value="P:L-leucine biosynthetic process"/>
    <property type="evidence" value="ECO:0007669"/>
    <property type="project" value="UniProtKB-UniRule"/>
</dbReference>
<dbReference type="CDD" id="cd01577">
    <property type="entry name" value="IPMI_Swivel"/>
    <property type="match status" value="1"/>
</dbReference>
<dbReference type="FunFam" id="3.20.19.10:FF:000003">
    <property type="entry name" value="3-isopropylmalate dehydratase small subunit"/>
    <property type="match status" value="1"/>
</dbReference>
<dbReference type="Gene3D" id="3.20.19.10">
    <property type="entry name" value="Aconitase, domain 4"/>
    <property type="match status" value="1"/>
</dbReference>
<dbReference type="HAMAP" id="MF_01031">
    <property type="entry name" value="LeuD_type1"/>
    <property type="match status" value="1"/>
</dbReference>
<dbReference type="InterPro" id="IPR004431">
    <property type="entry name" value="3-IsopropMal_deHydase_ssu"/>
</dbReference>
<dbReference type="InterPro" id="IPR015928">
    <property type="entry name" value="Aconitase/3IPM_dehydase_swvl"/>
</dbReference>
<dbReference type="InterPro" id="IPR000573">
    <property type="entry name" value="AconitaseA/IPMdHydase_ssu_swvl"/>
</dbReference>
<dbReference type="InterPro" id="IPR033940">
    <property type="entry name" value="IPMI_Swivel"/>
</dbReference>
<dbReference type="InterPro" id="IPR050075">
    <property type="entry name" value="LeuD"/>
</dbReference>
<dbReference type="NCBIfam" id="TIGR00171">
    <property type="entry name" value="leuD"/>
    <property type="match status" value="1"/>
</dbReference>
<dbReference type="NCBIfam" id="NF002458">
    <property type="entry name" value="PRK01641.1"/>
    <property type="match status" value="1"/>
</dbReference>
<dbReference type="PANTHER" id="PTHR43345:SF5">
    <property type="entry name" value="3-ISOPROPYLMALATE DEHYDRATASE SMALL SUBUNIT"/>
    <property type="match status" value="1"/>
</dbReference>
<dbReference type="PANTHER" id="PTHR43345">
    <property type="entry name" value="3-ISOPROPYLMALATE DEHYDRATASE SMALL SUBUNIT 2-RELATED-RELATED"/>
    <property type="match status" value="1"/>
</dbReference>
<dbReference type="Pfam" id="PF00694">
    <property type="entry name" value="Aconitase_C"/>
    <property type="match status" value="1"/>
</dbReference>
<dbReference type="SUPFAM" id="SSF52016">
    <property type="entry name" value="LeuD/IlvD-like"/>
    <property type="match status" value="1"/>
</dbReference>
<gene>
    <name evidence="1" type="primary">leuD</name>
    <name type="ordered locus">BURPS1710b_A0776</name>
</gene>
<name>LEUD_BURP1</name>
<feature type="chain" id="PRO_1000063745" description="3-isopropylmalate dehydratase small subunit">
    <location>
        <begin position="1"/>
        <end position="216"/>
    </location>
</feature>
<proteinExistence type="inferred from homology"/>
<sequence>MEKFNVHTGVVAPLDRENVDTDAIIPKQFLKSIKRTGFGPNAFDEWRYLDHGEPGQDNSKRPLNPDFVLNQPRYQGASVLLARKNFGCGSSREHAPWALQQYGFRAIVAPSFADIFFNNCYKNGLLPIVLTEQQVDHLFNDTYAFNGYQLTIDLDAQVVRAPDGREYPFEITAFRKYCLLNGFDDIGLTLRHADKIRQFEAERLAKQPWLDNRLVG</sequence>
<accession>Q3JKG8</accession>
<keyword id="KW-0028">Amino-acid biosynthesis</keyword>
<keyword id="KW-0100">Branched-chain amino acid biosynthesis</keyword>
<keyword id="KW-0432">Leucine biosynthesis</keyword>
<keyword id="KW-0456">Lyase</keyword>
<protein>
    <recommendedName>
        <fullName evidence="1">3-isopropylmalate dehydratase small subunit</fullName>
        <ecNumber evidence="1">4.2.1.33</ecNumber>
    </recommendedName>
    <alternativeName>
        <fullName evidence="1">Alpha-IPM isomerase</fullName>
        <shortName evidence="1">IPMI</shortName>
    </alternativeName>
    <alternativeName>
        <fullName evidence="1">Isopropylmalate isomerase</fullName>
    </alternativeName>
</protein>
<comment type="function">
    <text evidence="1">Catalyzes the isomerization between 2-isopropylmalate and 3-isopropylmalate, via the formation of 2-isopropylmaleate.</text>
</comment>
<comment type="catalytic activity">
    <reaction evidence="1">
        <text>(2R,3S)-3-isopropylmalate = (2S)-2-isopropylmalate</text>
        <dbReference type="Rhea" id="RHEA:32287"/>
        <dbReference type="ChEBI" id="CHEBI:1178"/>
        <dbReference type="ChEBI" id="CHEBI:35121"/>
        <dbReference type="EC" id="4.2.1.33"/>
    </reaction>
</comment>
<comment type="pathway">
    <text evidence="1">Amino-acid biosynthesis; L-leucine biosynthesis; L-leucine from 3-methyl-2-oxobutanoate: step 2/4.</text>
</comment>
<comment type="subunit">
    <text evidence="1">Heterodimer of LeuC and LeuD.</text>
</comment>
<comment type="similarity">
    <text evidence="1">Belongs to the LeuD family. LeuD type 1 subfamily.</text>
</comment>
<organism>
    <name type="scientific">Burkholderia pseudomallei (strain 1710b)</name>
    <dbReference type="NCBI Taxonomy" id="320372"/>
    <lineage>
        <taxon>Bacteria</taxon>
        <taxon>Pseudomonadati</taxon>
        <taxon>Pseudomonadota</taxon>
        <taxon>Betaproteobacteria</taxon>
        <taxon>Burkholderiales</taxon>
        <taxon>Burkholderiaceae</taxon>
        <taxon>Burkholderia</taxon>
        <taxon>pseudomallei group</taxon>
    </lineage>
</organism>